<comment type="function">
    <text evidence="1">tRNA nucleus export receptor which facilitates tRNA translocation across the nuclear pore complex. Involved in pre-tRNA splicing, probably by affecting the interaction of pre-tRNA with splicing endonuclease (By similarity).</text>
</comment>
<comment type="subcellular location">
    <subcellularLocation>
        <location evidence="1">Nucleus</location>
    </subcellularLocation>
    <subcellularLocation>
        <location evidence="1">Cytoplasm</location>
    </subcellularLocation>
    <text evidence="1">Shuttles between the nucleus and the cytoplasm.</text>
</comment>
<comment type="similarity">
    <text evidence="2">Belongs to the exportin family.</text>
</comment>
<comment type="sequence caution" evidence="2">
    <conflict type="erroneous gene model prediction">
        <sequence resource="EMBL-CDS" id="EAL91617"/>
    </conflict>
</comment>
<name>XPOT_ASPFU</name>
<accession>Q4WUV9</accession>
<dbReference type="EMBL" id="AAHF01000003">
    <property type="protein sequence ID" value="EAL91617.1"/>
    <property type="status" value="ALT_SEQ"/>
    <property type="molecule type" value="Genomic_DNA"/>
</dbReference>
<dbReference type="RefSeq" id="XP_753655.1">
    <property type="nucleotide sequence ID" value="XM_748562.1"/>
</dbReference>
<dbReference type="SMR" id="Q4WUV9"/>
<dbReference type="FunCoup" id="Q4WUV9">
    <property type="interactions" value="1043"/>
</dbReference>
<dbReference type="STRING" id="330879.Q4WUV9"/>
<dbReference type="GeneID" id="3511549"/>
<dbReference type="KEGG" id="afm:AFUA_5G09850"/>
<dbReference type="eggNOG" id="KOG2021">
    <property type="taxonomic scope" value="Eukaryota"/>
</dbReference>
<dbReference type="InParanoid" id="Q4WUV9"/>
<dbReference type="OrthoDB" id="26399at2759"/>
<dbReference type="Proteomes" id="UP000002530">
    <property type="component" value="Chromosome 5"/>
</dbReference>
<dbReference type="GO" id="GO:0005737">
    <property type="term" value="C:cytoplasm"/>
    <property type="evidence" value="ECO:0000318"/>
    <property type="project" value="GO_Central"/>
</dbReference>
<dbReference type="GO" id="GO:0016363">
    <property type="term" value="C:nuclear matrix"/>
    <property type="evidence" value="ECO:0000318"/>
    <property type="project" value="GO_Central"/>
</dbReference>
<dbReference type="GO" id="GO:0005643">
    <property type="term" value="C:nuclear pore"/>
    <property type="evidence" value="ECO:0000318"/>
    <property type="project" value="GO_Central"/>
</dbReference>
<dbReference type="GO" id="GO:0031267">
    <property type="term" value="F:small GTPase binding"/>
    <property type="evidence" value="ECO:0007669"/>
    <property type="project" value="InterPro"/>
</dbReference>
<dbReference type="GO" id="GO:0000049">
    <property type="term" value="F:tRNA binding"/>
    <property type="evidence" value="ECO:0000318"/>
    <property type="project" value="GO_Central"/>
</dbReference>
<dbReference type="GO" id="GO:0008033">
    <property type="term" value="P:tRNA processing"/>
    <property type="evidence" value="ECO:0007669"/>
    <property type="project" value="UniProtKB-KW"/>
</dbReference>
<dbReference type="GO" id="GO:0071528">
    <property type="term" value="P:tRNA re-export from nucleus"/>
    <property type="evidence" value="ECO:0000318"/>
    <property type="project" value="GO_Central"/>
</dbReference>
<dbReference type="FunFam" id="1.25.10.10:FF:000355">
    <property type="entry name" value="Exportin-T"/>
    <property type="match status" value="1"/>
</dbReference>
<dbReference type="Gene3D" id="1.25.10.10">
    <property type="entry name" value="Leucine-rich Repeat Variant"/>
    <property type="match status" value="1"/>
</dbReference>
<dbReference type="InterPro" id="IPR011989">
    <property type="entry name" value="ARM-like"/>
</dbReference>
<dbReference type="InterPro" id="IPR016024">
    <property type="entry name" value="ARM-type_fold"/>
</dbReference>
<dbReference type="InterPro" id="IPR013598">
    <property type="entry name" value="Exportin-1/Importin-b-like"/>
</dbReference>
<dbReference type="InterPro" id="IPR045546">
    <property type="entry name" value="Exportin-T_C"/>
</dbReference>
<dbReference type="InterPro" id="IPR040017">
    <property type="entry name" value="XPOT"/>
</dbReference>
<dbReference type="PANTHER" id="PTHR15952:SF11">
    <property type="entry name" value="EXPORTIN-T"/>
    <property type="match status" value="1"/>
</dbReference>
<dbReference type="PANTHER" id="PTHR15952">
    <property type="entry name" value="EXPORTIN-T/LOS1"/>
    <property type="match status" value="1"/>
</dbReference>
<dbReference type="Pfam" id="PF19282">
    <property type="entry name" value="Exportin-T"/>
    <property type="match status" value="1"/>
</dbReference>
<dbReference type="Pfam" id="PF08389">
    <property type="entry name" value="Xpo1"/>
    <property type="match status" value="1"/>
</dbReference>
<dbReference type="SUPFAM" id="SSF48371">
    <property type="entry name" value="ARM repeat"/>
    <property type="match status" value="1"/>
</dbReference>
<sequence>MEEQVANAIEIASNPSADPALKTQAFDFVNQLRSDPSGWQVCLSLFTQTPQRSGIVRHVALEVVNSAAQGGLIDLQALAYVKDGLLAYLRQVYGQDAGASDPPNIQNKIAQTITFLFSALYASGWESFFDDLLGLTQKSPSSTTRDNASGIIFYLRVINSIHDEIGDVLVSRSRNEQDKANALKDLIRQRDMQKITSSWQQILSEWRDGNDVIVEMCLKAVGSWVSWIDIGLVVNQTMLDLLFQQLGRAQKEDLRQGEEKVRDAAVDVFTEIIGKKMKPEDKIDMIIFLNLDTIVSQLSNSPPLHGNRFTFKYDTDLAETVAKLVNITVIDIVRALEQEGVSTECKEKANGLLQAFLPHILRYFSDEYDEVCSTVIPCVSDLLTYLRRIAKVNPALASQHSSILLPILKAIIAKMRYDETSSWGEEDEQTDEAEFQELRKRLGILQQMIASINEQLYMEVVSEMVATTFENLRQSGSQMDWRDLDLALHEMFLFGDLAVKAGSLYTKGNPNNQAAERLIEMMLRMVESDIRSFTHPATQLQYTEICVRYSSFFHHHTHLIPGVLENFLQLVHHPIKKVKTRSWYLFQRLVKQLRQYVGNVAQTVVEALGDLLVIRAELPSEVSEGDEMSSEDHELADAIFNSQLYLFEAVGIICSTPTISPDKQVLYVQAVLNPIFLDMEKNLEAAKSQDERAILQIHHDIMALGTLARGFSDWMPGTNTPATLPAPEVSAAFNQVAEATLVALESLKSSFNVRTAARFAFSRLIGVLGSRILPQLPRWIDGLLTQTSSRDEMALFLRLLDQVIFGFKGEIFSILDTLLTPFLQRVFSGIADPTTGTDDEIQLAELKREYLNFLLAVLNNDLGAVIISERNQPIFETVISTIEHFSKDIDDFTTAKMAFSVLSKMSSSWGGPDVIAEASNGTPPSQAPLPGFGQFMITRFSPLCWALPSTPSFNSKDAQAKQVLAEAGGLQRTIYAKTGMEYLTYLRDRELPGMGMGGELIEEFVGALSRLDLKGFRQFFPVCLSNFHILSI</sequence>
<proteinExistence type="inferred from homology"/>
<organism>
    <name type="scientific">Aspergillus fumigatus (strain ATCC MYA-4609 / CBS 101355 / FGSC A1100 / Af293)</name>
    <name type="common">Neosartorya fumigata</name>
    <dbReference type="NCBI Taxonomy" id="330879"/>
    <lineage>
        <taxon>Eukaryota</taxon>
        <taxon>Fungi</taxon>
        <taxon>Dikarya</taxon>
        <taxon>Ascomycota</taxon>
        <taxon>Pezizomycotina</taxon>
        <taxon>Eurotiomycetes</taxon>
        <taxon>Eurotiomycetidae</taxon>
        <taxon>Eurotiales</taxon>
        <taxon>Aspergillaceae</taxon>
        <taxon>Aspergillus</taxon>
        <taxon>Aspergillus subgen. Fumigati</taxon>
    </lineage>
</organism>
<evidence type="ECO:0000250" key="1"/>
<evidence type="ECO:0000305" key="2"/>
<protein>
    <recommendedName>
        <fullName>Exportin-T</fullName>
    </recommendedName>
    <alternativeName>
        <fullName>Exportin(tRNA)</fullName>
    </alternativeName>
    <alternativeName>
        <fullName>Karyopherin-beta</fullName>
    </alternativeName>
    <alternativeName>
        <fullName>tRNA exportin</fullName>
    </alternativeName>
</protein>
<feature type="chain" id="PRO_0000343081" description="Exportin-T">
    <location>
        <begin position="1"/>
        <end position="1032"/>
    </location>
</feature>
<gene>
    <name type="primary">los1</name>
    <name type="ORF">AFUA_5G09850</name>
</gene>
<reference key="1">
    <citation type="journal article" date="2005" name="Nature">
        <title>Genomic sequence of the pathogenic and allergenic filamentous fungus Aspergillus fumigatus.</title>
        <authorList>
            <person name="Nierman W.C."/>
            <person name="Pain A."/>
            <person name="Anderson M.J."/>
            <person name="Wortman J.R."/>
            <person name="Kim H.S."/>
            <person name="Arroyo J."/>
            <person name="Berriman M."/>
            <person name="Abe K."/>
            <person name="Archer D.B."/>
            <person name="Bermejo C."/>
            <person name="Bennett J.W."/>
            <person name="Bowyer P."/>
            <person name="Chen D."/>
            <person name="Collins M."/>
            <person name="Coulsen R."/>
            <person name="Davies R."/>
            <person name="Dyer P.S."/>
            <person name="Farman M.L."/>
            <person name="Fedorova N."/>
            <person name="Fedorova N.D."/>
            <person name="Feldblyum T.V."/>
            <person name="Fischer R."/>
            <person name="Fosker N."/>
            <person name="Fraser A."/>
            <person name="Garcia J.L."/>
            <person name="Garcia M.J."/>
            <person name="Goble A."/>
            <person name="Goldman G.H."/>
            <person name="Gomi K."/>
            <person name="Griffith-Jones S."/>
            <person name="Gwilliam R."/>
            <person name="Haas B.J."/>
            <person name="Haas H."/>
            <person name="Harris D.E."/>
            <person name="Horiuchi H."/>
            <person name="Huang J."/>
            <person name="Humphray S."/>
            <person name="Jimenez J."/>
            <person name="Keller N."/>
            <person name="Khouri H."/>
            <person name="Kitamoto K."/>
            <person name="Kobayashi T."/>
            <person name="Konzack S."/>
            <person name="Kulkarni R."/>
            <person name="Kumagai T."/>
            <person name="Lafton A."/>
            <person name="Latge J.-P."/>
            <person name="Li W."/>
            <person name="Lord A."/>
            <person name="Lu C."/>
            <person name="Majoros W.H."/>
            <person name="May G.S."/>
            <person name="Miller B.L."/>
            <person name="Mohamoud Y."/>
            <person name="Molina M."/>
            <person name="Monod M."/>
            <person name="Mouyna I."/>
            <person name="Mulligan S."/>
            <person name="Murphy L.D."/>
            <person name="O'Neil S."/>
            <person name="Paulsen I."/>
            <person name="Penalva M.A."/>
            <person name="Pertea M."/>
            <person name="Price C."/>
            <person name="Pritchard B.L."/>
            <person name="Quail M.A."/>
            <person name="Rabbinowitsch E."/>
            <person name="Rawlins N."/>
            <person name="Rajandream M.A."/>
            <person name="Reichard U."/>
            <person name="Renauld H."/>
            <person name="Robson G.D."/>
            <person name="Rodriguez de Cordoba S."/>
            <person name="Rodriguez-Pena J.M."/>
            <person name="Ronning C.M."/>
            <person name="Rutter S."/>
            <person name="Salzberg S.L."/>
            <person name="Sanchez M."/>
            <person name="Sanchez-Ferrero J.C."/>
            <person name="Saunders D."/>
            <person name="Seeger K."/>
            <person name="Squares R."/>
            <person name="Squares S."/>
            <person name="Takeuchi M."/>
            <person name="Tekaia F."/>
            <person name="Turner G."/>
            <person name="Vazquez de Aldana C.R."/>
            <person name="Weidman J."/>
            <person name="White O."/>
            <person name="Woodward J.R."/>
            <person name="Yu J.-H."/>
            <person name="Fraser C.M."/>
            <person name="Galagan J.E."/>
            <person name="Asai K."/>
            <person name="Machida M."/>
            <person name="Hall N."/>
            <person name="Barrell B.G."/>
            <person name="Denning D.W."/>
        </authorList>
    </citation>
    <scope>NUCLEOTIDE SEQUENCE [LARGE SCALE GENOMIC DNA]</scope>
    <source>
        <strain>ATCC MYA-4609 / CBS 101355 / FGSC A1100 / Af293</strain>
    </source>
</reference>
<keyword id="KW-0963">Cytoplasm</keyword>
<keyword id="KW-0539">Nucleus</keyword>
<keyword id="KW-1185">Reference proteome</keyword>
<keyword id="KW-0694">RNA-binding</keyword>
<keyword id="KW-0813">Transport</keyword>
<keyword id="KW-0819">tRNA processing</keyword>
<keyword id="KW-0820">tRNA-binding</keyword>